<protein>
    <recommendedName>
        <fullName>UDP-glucuronosyltransferase 2B19</fullName>
        <shortName>UDPGT 2B19</shortName>
        <ecNumber>2.4.1.17</ecNumber>
    </recommendedName>
</protein>
<proteinExistence type="evidence at protein level"/>
<feature type="signal peptide" evidence="3">
    <location>
        <begin position="1"/>
        <end position="21"/>
    </location>
</feature>
<feature type="chain" id="PRO_0000036043" description="UDP-glucuronosyltransferase 2B19">
    <location>
        <begin position="22"/>
        <end position="528"/>
    </location>
</feature>
<feature type="transmembrane region" description="Helical" evidence="3">
    <location>
        <begin position="493"/>
        <end position="513"/>
    </location>
</feature>
<feature type="modified residue" description="N6-succinyllysine" evidence="2">
    <location>
        <position position="135"/>
    </location>
</feature>
<feature type="glycosylation site" description="N-linked (GlcNAc...) asparagine" evidence="3">
    <location>
        <position position="315"/>
    </location>
</feature>
<organism>
    <name type="scientific">Macaca fascicularis</name>
    <name type="common">Crab-eating macaque</name>
    <name type="synonym">Cynomolgus monkey</name>
    <dbReference type="NCBI Taxonomy" id="9541"/>
    <lineage>
        <taxon>Eukaryota</taxon>
        <taxon>Metazoa</taxon>
        <taxon>Chordata</taxon>
        <taxon>Craniata</taxon>
        <taxon>Vertebrata</taxon>
        <taxon>Euteleostomi</taxon>
        <taxon>Mammalia</taxon>
        <taxon>Eutheria</taxon>
        <taxon>Euarchontoglires</taxon>
        <taxon>Primates</taxon>
        <taxon>Haplorrhini</taxon>
        <taxon>Catarrhini</taxon>
        <taxon>Cercopithecidae</taxon>
        <taxon>Cercopithecinae</taxon>
        <taxon>Macaca</taxon>
    </lineage>
</organism>
<sequence length="528" mass="60742">MSMKWTSALLLIQLSCYLSFGSCGKVLVWPTEFSHWMNIKTILDELVQRGHEVTVLAYSTSILPDPNNPSPLKFEICPTSLTETEFQDSVTQLVKRWSDIRKDTFWPHFLHVQEMMWTYGDMIRKFCKDVVSNKKLMKKLQESRFDVVLADAISPCGELLAELLKIPFVYSLRFSPGYALEKHGGGFLFPPSYVPVTMSELRDQMTFMERVQNMIYMVYFDFWFQVWDVKNWDQFYSKVLGRPTTLFEIMAKAEIWLIRNYWDFQFPHPLLPNVEFVGGLHCKPAKPLPKEMEEFVQSSGDNGVVVFSLGSMVSNMSEERANVIASALAKIPQKVLWRFDGNKPDTLGLNTQLYKWLPQNDLLGHPKTRAFITHGGANGIYEAIYHGIPMVGVPLFADQPDNIAHMKAKGAAVRLDFDTMSSTDLLNALKTVINDPIYKENAMKLSSIHHDQPVKPLDRAVFWIEFVMRHKGAKHLRVAAHDLTWFQYHSLDVIGFLLACVATVIFIITKCLFCVWKFVRTRKKGKRD</sequence>
<accession>Q9XT55</accession>
<reference key="1">
    <citation type="journal article" date="1999" name="Eur. J. Biochem.">
        <title>Molecular cloning, expression and characterization of a monkey steroid UDP-glucuronosyltransferase, UGT2B19, that conjugates testosterone.</title>
        <authorList>
            <person name="Belanger G."/>
            <person name="Barbier O."/>
            <person name="Hum D.W."/>
            <person name="Belanger A."/>
        </authorList>
    </citation>
    <scope>NUCLEOTIDE SEQUENCE [MRNA]</scope>
    <scope>CHARACTERIZATION</scope>
    <source>
        <tissue>Liver</tissue>
        <tissue>Prostate</tissue>
    </source>
</reference>
<gene>
    <name type="primary">UGT2B19</name>
</gene>
<keyword id="KW-0256">Endoplasmic reticulum</keyword>
<keyword id="KW-0325">Glycoprotein</keyword>
<keyword id="KW-0328">Glycosyltransferase</keyword>
<keyword id="KW-0472">Membrane</keyword>
<keyword id="KW-0492">Microsome</keyword>
<keyword id="KW-1185">Reference proteome</keyword>
<keyword id="KW-0732">Signal</keyword>
<keyword id="KW-0808">Transferase</keyword>
<keyword id="KW-0812">Transmembrane</keyword>
<keyword id="KW-1133">Transmembrane helix</keyword>
<name>UDB19_MACFA</name>
<evidence type="ECO:0000250" key="1"/>
<evidence type="ECO:0000250" key="2">
    <source>
        <dbReference type="UniProtKB" id="Q8BWQ1"/>
    </source>
</evidence>
<evidence type="ECO:0000255" key="3"/>
<evidence type="ECO:0000305" key="4"/>
<comment type="function">
    <text>UDPGT is of major importance in the conjugation and subsequent elimination of potentially toxic xenobiotics and endogenous compounds. This isozyme displays activity toward several classes of xenobiotic substrates: eugenol, 4-methyllumbelliferone, p-nitrophenol, 1-naphthol, p,p'-biphenol, naringenin and o,o'-biphenol. Active also on 3a-hydroxy and 17b-hydroxy positions of steroids.</text>
</comment>
<comment type="function">
    <text>Contributes to the formation of androgen glucuronide in extrahepatic steroid target tissues such as the prostate.</text>
</comment>
<comment type="catalytic activity">
    <reaction>
        <text>glucuronate acceptor + UDP-alpha-D-glucuronate = acceptor beta-D-glucuronoside + UDP + H(+)</text>
        <dbReference type="Rhea" id="RHEA:21032"/>
        <dbReference type="ChEBI" id="CHEBI:15378"/>
        <dbReference type="ChEBI" id="CHEBI:58052"/>
        <dbReference type="ChEBI" id="CHEBI:58223"/>
        <dbReference type="ChEBI" id="CHEBI:132367"/>
        <dbReference type="ChEBI" id="CHEBI:132368"/>
        <dbReference type="EC" id="2.4.1.17"/>
    </reaction>
</comment>
<comment type="subcellular location">
    <subcellularLocation>
        <location evidence="1">Microsome membrane</location>
        <topology evidence="1">Single-pass membrane protein</topology>
    </subcellularLocation>
    <subcellularLocation>
        <location evidence="4">Endoplasmic reticulum membrane</location>
        <topology evidence="4">Single-pass membrane protein</topology>
    </subcellularLocation>
</comment>
<comment type="tissue specificity">
    <text>Expressed in liver, ovary, prostate, colon, kidney, pancreas, brain, cerebellum, mammary gland and epididymis. Not expressed in small intestine, spleen, bladder, adrenal gland and testis.</text>
</comment>
<comment type="similarity">
    <text evidence="4">Belongs to the UDP-glycosyltransferase family.</text>
</comment>
<dbReference type="EC" id="2.4.1.17"/>
<dbReference type="EMBL" id="AF112112">
    <property type="protein sequence ID" value="AAD24435.1"/>
    <property type="molecule type" value="mRNA"/>
</dbReference>
<dbReference type="RefSeq" id="NP_001306405.1">
    <property type="nucleotide sequence ID" value="NM_001319476.1"/>
</dbReference>
<dbReference type="SMR" id="Q9XT55"/>
<dbReference type="STRING" id="9541.ENSMFAP00000009153"/>
<dbReference type="CAZy" id="GT1">
    <property type="family name" value="Glycosyltransferase Family 1"/>
</dbReference>
<dbReference type="GlyCosmos" id="Q9XT55">
    <property type="glycosylation" value="1 site, No reported glycans"/>
</dbReference>
<dbReference type="eggNOG" id="KOG1192">
    <property type="taxonomic scope" value="Eukaryota"/>
</dbReference>
<dbReference type="SABIO-RK" id="Q9XT55"/>
<dbReference type="Proteomes" id="UP000233100">
    <property type="component" value="Unplaced"/>
</dbReference>
<dbReference type="GO" id="GO:0005789">
    <property type="term" value="C:endoplasmic reticulum membrane"/>
    <property type="evidence" value="ECO:0007669"/>
    <property type="project" value="UniProtKB-SubCell"/>
</dbReference>
<dbReference type="GO" id="GO:0015020">
    <property type="term" value="F:glucuronosyltransferase activity"/>
    <property type="evidence" value="ECO:0007669"/>
    <property type="project" value="UniProtKB-EC"/>
</dbReference>
<dbReference type="CDD" id="cd03784">
    <property type="entry name" value="GT1_Gtf-like"/>
    <property type="match status" value="1"/>
</dbReference>
<dbReference type="FunFam" id="3.40.50.2000:FF:000001">
    <property type="entry name" value="UDP-glucuronosyltransferase"/>
    <property type="match status" value="1"/>
</dbReference>
<dbReference type="FunFam" id="3.40.50.2000:FF:000081">
    <property type="entry name" value="UDP-glucuronosyltransferase 2A2"/>
    <property type="match status" value="1"/>
</dbReference>
<dbReference type="Gene3D" id="3.40.50.2000">
    <property type="entry name" value="Glycogen Phosphorylase B"/>
    <property type="match status" value="2"/>
</dbReference>
<dbReference type="InterPro" id="IPR050271">
    <property type="entry name" value="UDP-glycosyltransferase"/>
</dbReference>
<dbReference type="InterPro" id="IPR002213">
    <property type="entry name" value="UDP_glucos_trans"/>
</dbReference>
<dbReference type="InterPro" id="IPR035595">
    <property type="entry name" value="UDP_glycos_trans_CS"/>
</dbReference>
<dbReference type="PANTHER" id="PTHR48043">
    <property type="entry name" value="EG:EG0003.4 PROTEIN-RELATED"/>
    <property type="match status" value="1"/>
</dbReference>
<dbReference type="PANTHER" id="PTHR48043:SF12">
    <property type="entry name" value="UDP-GLUCURONOSYLTRANSFERASE 2B4"/>
    <property type="match status" value="1"/>
</dbReference>
<dbReference type="Pfam" id="PF00201">
    <property type="entry name" value="UDPGT"/>
    <property type="match status" value="1"/>
</dbReference>
<dbReference type="SUPFAM" id="SSF53756">
    <property type="entry name" value="UDP-Glycosyltransferase/glycogen phosphorylase"/>
    <property type="match status" value="1"/>
</dbReference>
<dbReference type="PROSITE" id="PS00375">
    <property type="entry name" value="UDPGT"/>
    <property type="match status" value="1"/>
</dbReference>